<organismHost>
    <name type="scientific">Macroptilium lathyroides</name>
    <dbReference type="NCBI Taxonomy" id="260885"/>
</organismHost>
<organismHost>
    <name type="scientific">Malvastrum coromandelianum</name>
    <dbReference type="NCBI Taxonomy" id="108453"/>
</organismHost>
<organismHost>
    <name type="scientific">Phaseolus lunatus</name>
    <name type="common">Lima bean</name>
    <name type="synonym">Phaseolus limensis</name>
    <dbReference type="NCBI Taxonomy" id="3884"/>
</organismHost>
<organismHost>
    <name type="scientific">Phaseolus vulgaris</name>
    <name type="common">Kidney bean</name>
    <name type="synonym">French bean</name>
    <dbReference type="NCBI Taxonomy" id="3885"/>
</organismHost>
<proteinExistence type="inferred from homology"/>
<keyword id="KW-0238">DNA-binding</keyword>
<keyword id="KW-1032">Host cell membrane</keyword>
<keyword id="KW-1038">Host endoplasmic reticulum</keyword>
<keyword id="KW-1043">Host membrane</keyword>
<keyword id="KW-1044">Host microsome</keyword>
<keyword id="KW-0472">Membrane</keyword>
<keyword id="KW-0597">Phosphoprotein</keyword>
<keyword id="KW-1185">Reference proteome</keyword>
<keyword id="KW-0813">Transport</keyword>
<keyword id="KW-0916">Viral movement protein</keyword>
<organism>
    <name type="scientific">Bean golden yellow mosaic virus (isolate Puerto Rico-Japan)</name>
    <name type="common">BGYMV</name>
    <dbReference type="NCBI Taxonomy" id="222449"/>
    <lineage>
        <taxon>Viruses</taxon>
        <taxon>Monodnaviria</taxon>
        <taxon>Shotokuvirae</taxon>
        <taxon>Cressdnaviricota</taxon>
        <taxon>Repensiviricetes</taxon>
        <taxon>Geplafuvirales</taxon>
        <taxon>Geminiviridae</taxon>
        <taxon>Begomovirus</taxon>
        <taxon>Bean golden yellow mosaic virus</taxon>
    </lineage>
</organism>
<sequence>MDSQLANPPNAFNYIESHRDEYQLSHDLTEIILQFPSTASQLSARFSRSCMKIDHCVIEYRQQVPINATGSVVVEIHDKRMTDNESLQASWTFPIRCNIDLHYFSSSFFSLKDPIPWKLYYRVSDTNVHQRTHFAKFKGKLKLSTAKHSVDIPFRAPTVKILSKQFSNKDIDFSHVDYGKWERKLIRSASLSKYGLQGPIELKPGESWASKSTIGVSHLDADSDLDSAIHPYKNLNRLGSSVLDPGDSASIIGAQRAQSNITLSIAQLNEIVRSTVNECINNNCIHVQPKSLK</sequence>
<gene>
    <name type="ORF">BC1</name>
    <name type="ORF">BL1</name>
</gene>
<protein>
    <recommendedName>
        <fullName>Movement protein BC1</fullName>
    </recommendedName>
    <alternativeName>
        <fullName>Movement protein BL1</fullName>
    </alternativeName>
</protein>
<accession>P0CK44</accession>
<accession>P06001</accession>
<accession>Q67573</accession>
<name>MVP_BGYMJ</name>
<feature type="chain" id="PRO_0000415534" description="Movement protein BC1">
    <location>
        <begin position="1"/>
        <end position="293"/>
    </location>
</feature>
<dbReference type="EMBL" id="D00200">
    <property type="protein sequence ID" value="BAA00134.1"/>
    <property type="molecule type" value="Genomic_DNA"/>
</dbReference>
<dbReference type="RefSeq" id="NP_040769.1">
    <property type="nucleotide sequence ID" value="NC_001438.1"/>
</dbReference>
<dbReference type="GeneID" id="988085"/>
<dbReference type="KEGG" id="vg:988085"/>
<dbReference type="Proteomes" id="UP000008769">
    <property type="component" value="Genome"/>
</dbReference>
<dbReference type="GO" id="GO:0044167">
    <property type="term" value="C:host cell endoplasmic reticulum membrane"/>
    <property type="evidence" value="ECO:0007669"/>
    <property type="project" value="UniProtKB-SubCell"/>
</dbReference>
<dbReference type="GO" id="GO:0020002">
    <property type="term" value="C:host cell plasma membrane"/>
    <property type="evidence" value="ECO:0007669"/>
    <property type="project" value="UniProtKB-SubCell"/>
</dbReference>
<dbReference type="GO" id="GO:0016020">
    <property type="term" value="C:membrane"/>
    <property type="evidence" value="ECO:0007669"/>
    <property type="project" value="UniProtKB-KW"/>
</dbReference>
<dbReference type="GO" id="GO:0003677">
    <property type="term" value="F:DNA binding"/>
    <property type="evidence" value="ECO:0007669"/>
    <property type="project" value="UniProtKB-KW"/>
</dbReference>
<dbReference type="GO" id="GO:0046740">
    <property type="term" value="P:transport of virus in host, cell to cell"/>
    <property type="evidence" value="ECO:0007669"/>
    <property type="project" value="UniProtKB-KW"/>
</dbReference>
<dbReference type="InterPro" id="IPR000211">
    <property type="entry name" value="Gemini_BL"/>
</dbReference>
<dbReference type="Pfam" id="PF00845">
    <property type="entry name" value="Gemini_BL1"/>
    <property type="match status" value="1"/>
</dbReference>
<comment type="function">
    <text evidence="1">Transports viral genome to neighboring plant cells directly through plasmosdesmata, without any budding. The movement protein allows efficient cell to cell propagation, by bypassing the host cell wall barrier. Begomovirus genome is shuttled out of nucleus by Nuclear shuttle protein (NSP) and the movement protein transports the DNA-NSP complex to cell plasmodesmata and facilitates further movement across the cell wall (By similarity).</text>
</comment>
<comment type="subunit">
    <text evidence="1">Binds to dimeric supercoiled plasmid DNA.</text>
</comment>
<comment type="subcellular location">
    <subcellularLocation>
        <location evidence="1">Host cell membrane</location>
        <topology evidence="1">Peripheral membrane protein</topology>
        <orientation evidence="1">Cytoplasmic side</orientation>
    </subcellularLocation>
    <subcellularLocation>
        <location evidence="1">Host microsome membrane</location>
        <topology evidence="1">Peripheral membrane protein</topology>
        <orientation evidence="1">Cytoplasmic side</orientation>
    </subcellularLocation>
    <subcellularLocation>
        <location evidence="1">Host endoplasmic reticulum membrane</location>
        <topology evidence="1">Peripheral membrane protein</topology>
        <orientation evidence="1">Cytoplasmic side</orientation>
    </subcellularLocation>
    <text evidence="1">Found on ER-derived vesicles.</text>
</comment>
<comment type="PTM">
    <text evidence="1">Phosphorylated.</text>
</comment>
<comment type="similarity">
    <text evidence="2">Belongs to the begomovirus movement protein BC1 family.</text>
</comment>
<evidence type="ECO:0000250" key="1"/>
<evidence type="ECO:0000305" key="2"/>
<reference key="1">
    <citation type="journal article" date="1987" name="Microbiol. Immunol.">
        <title>Total nucleotide sequences of the infectious cloned DNAs of bean golden mosaic virus.</title>
        <authorList>
            <person name="Morinaga T."/>
            <person name="Ikegami M."/>
            <person name="Shimotohno K."/>
            <person name="Miura K."/>
        </authorList>
    </citation>
    <scope>NUCLEOTIDE SEQUENCE [GENOMIC DNA]</scope>
</reference>